<organism>
    <name type="scientific">Gazella spekei</name>
    <name type="common">Speke's gazelle</name>
    <dbReference type="NCBI Taxonomy" id="69307"/>
    <lineage>
        <taxon>Eukaryota</taxon>
        <taxon>Metazoa</taxon>
        <taxon>Chordata</taxon>
        <taxon>Craniata</taxon>
        <taxon>Vertebrata</taxon>
        <taxon>Euteleostomi</taxon>
        <taxon>Mammalia</taxon>
        <taxon>Eutheria</taxon>
        <taxon>Laurasiatheria</taxon>
        <taxon>Artiodactyla</taxon>
        <taxon>Ruminantia</taxon>
        <taxon>Pecora</taxon>
        <taxon>Bovidae</taxon>
        <taxon>Antilopinae</taxon>
        <taxon>Gazella</taxon>
    </lineage>
</organism>
<proteinExistence type="inferred from homology"/>
<feature type="chain" id="PRO_0000183785" description="Cytochrome c oxidase subunit 3">
    <location>
        <begin position="1"/>
        <end position="261"/>
    </location>
</feature>
<feature type="topological domain" description="Mitochondrial matrix" evidence="1">
    <location>
        <begin position="1"/>
        <end position="15"/>
    </location>
</feature>
<feature type="transmembrane region" description="Helical; Name=I" evidence="1">
    <location>
        <begin position="16"/>
        <end position="34"/>
    </location>
</feature>
<feature type="topological domain" description="Mitochondrial intermembrane" evidence="1">
    <location>
        <begin position="35"/>
        <end position="40"/>
    </location>
</feature>
<feature type="transmembrane region" description="Helical; Name=II" evidence="1">
    <location>
        <begin position="41"/>
        <end position="66"/>
    </location>
</feature>
<feature type="topological domain" description="Mitochondrial matrix" evidence="1">
    <location>
        <begin position="67"/>
        <end position="72"/>
    </location>
</feature>
<feature type="transmembrane region" description="Helical; Name=III" evidence="1">
    <location>
        <begin position="73"/>
        <end position="105"/>
    </location>
</feature>
<feature type="topological domain" description="Mitochondrial intermembrane" evidence="1">
    <location>
        <begin position="106"/>
        <end position="128"/>
    </location>
</feature>
<feature type="transmembrane region" description="Helical; Name=IV" evidence="1">
    <location>
        <begin position="129"/>
        <end position="152"/>
    </location>
</feature>
<feature type="topological domain" description="Mitochondrial matrix" evidence="1">
    <location>
        <begin position="153"/>
        <end position="155"/>
    </location>
</feature>
<feature type="transmembrane region" description="Helical; Name=V" evidence="1">
    <location>
        <begin position="156"/>
        <end position="183"/>
    </location>
</feature>
<feature type="topological domain" description="Mitochondrial intermembrane" evidence="1">
    <location>
        <begin position="184"/>
        <end position="190"/>
    </location>
</feature>
<feature type="transmembrane region" description="Helical; Name=VI" evidence="1">
    <location>
        <begin position="191"/>
        <end position="223"/>
    </location>
</feature>
<feature type="topological domain" description="Mitochondrial matrix" evidence="1">
    <location>
        <begin position="224"/>
        <end position="232"/>
    </location>
</feature>
<feature type="transmembrane region" description="Helical; Name=VII" evidence="1">
    <location>
        <begin position="233"/>
        <end position="256"/>
    </location>
</feature>
<feature type="topological domain" description="Mitochondrial intermembrane" evidence="1">
    <location>
        <begin position="257"/>
        <end position="261"/>
    </location>
</feature>
<name>COX3_GAZSP</name>
<dbReference type="EC" id="7.1.1.9"/>
<dbReference type="EMBL" id="AF030474">
    <property type="protein sequence ID" value="AAB93613.1"/>
    <property type="molecule type" value="Genomic_DNA"/>
</dbReference>
<dbReference type="SMR" id="P68300"/>
<dbReference type="CTD" id="4514"/>
<dbReference type="GO" id="GO:0005743">
    <property type="term" value="C:mitochondrial inner membrane"/>
    <property type="evidence" value="ECO:0007669"/>
    <property type="project" value="UniProtKB-SubCell"/>
</dbReference>
<dbReference type="GO" id="GO:0045277">
    <property type="term" value="C:respiratory chain complex IV"/>
    <property type="evidence" value="ECO:0000250"/>
    <property type="project" value="UniProtKB"/>
</dbReference>
<dbReference type="GO" id="GO:0004129">
    <property type="term" value="F:cytochrome-c oxidase activity"/>
    <property type="evidence" value="ECO:0007669"/>
    <property type="project" value="UniProtKB-EC"/>
</dbReference>
<dbReference type="GO" id="GO:0006123">
    <property type="term" value="P:mitochondrial electron transport, cytochrome c to oxygen"/>
    <property type="evidence" value="ECO:0007669"/>
    <property type="project" value="TreeGrafter"/>
</dbReference>
<dbReference type="GO" id="GO:0008535">
    <property type="term" value="P:respiratory chain complex IV assembly"/>
    <property type="evidence" value="ECO:0000250"/>
    <property type="project" value="UniProtKB"/>
</dbReference>
<dbReference type="CDD" id="cd01665">
    <property type="entry name" value="Cyt_c_Oxidase_III"/>
    <property type="match status" value="1"/>
</dbReference>
<dbReference type="FunFam" id="1.10.287.70:FF:000048">
    <property type="entry name" value="Cytochrome c oxidase subunit 3"/>
    <property type="match status" value="1"/>
</dbReference>
<dbReference type="FunFam" id="1.20.120.80:FF:000002">
    <property type="entry name" value="Cytochrome c oxidase subunit 3"/>
    <property type="match status" value="1"/>
</dbReference>
<dbReference type="Gene3D" id="1.10.287.70">
    <property type="match status" value="1"/>
</dbReference>
<dbReference type="Gene3D" id="1.20.120.80">
    <property type="entry name" value="Cytochrome c oxidase, subunit III, four-helix bundle"/>
    <property type="match status" value="1"/>
</dbReference>
<dbReference type="InterPro" id="IPR024791">
    <property type="entry name" value="Cyt_c/ubiquinol_Oxase_su3"/>
</dbReference>
<dbReference type="InterPro" id="IPR033945">
    <property type="entry name" value="Cyt_c_oxase_su3_dom"/>
</dbReference>
<dbReference type="InterPro" id="IPR000298">
    <property type="entry name" value="Cyt_c_oxidase-like_su3"/>
</dbReference>
<dbReference type="InterPro" id="IPR035973">
    <property type="entry name" value="Cyt_c_oxidase_su3-like_sf"/>
</dbReference>
<dbReference type="InterPro" id="IPR013833">
    <property type="entry name" value="Cyt_c_oxidase_su3_a-hlx"/>
</dbReference>
<dbReference type="PANTHER" id="PTHR11403:SF7">
    <property type="entry name" value="CYTOCHROME C OXIDASE SUBUNIT 3"/>
    <property type="match status" value="1"/>
</dbReference>
<dbReference type="PANTHER" id="PTHR11403">
    <property type="entry name" value="CYTOCHROME C OXIDASE SUBUNIT III"/>
    <property type="match status" value="1"/>
</dbReference>
<dbReference type="Pfam" id="PF00510">
    <property type="entry name" value="COX3"/>
    <property type="match status" value="1"/>
</dbReference>
<dbReference type="SUPFAM" id="SSF81452">
    <property type="entry name" value="Cytochrome c oxidase subunit III-like"/>
    <property type="match status" value="1"/>
</dbReference>
<dbReference type="PROSITE" id="PS50253">
    <property type="entry name" value="COX3"/>
    <property type="match status" value="1"/>
</dbReference>
<protein>
    <recommendedName>
        <fullName>Cytochrome c oxidase subunit 3</fullName>
        <ecNumber>7.1.1.9</ecNumber>
    </recommendedName>
    <alternativeName>
        <fullName>Cytochrome c oxidase polypeptide III</fullName>
    </alternativeName>
</protein>
<reference key="1">
    <citation type="journal article" date="1999" name="Mol. Phylogenet. Evol.">
        <title>Phylogenetic relationships in the bovid subfamily Antilopinae based on mitochondrial DNA sequences.</title>
        <authorList>
            <person name="Rebholz W.E.R."/>
            <person name="Harley E.H."/>
        </authorList>
    </citation>
    <scope>NUCLEOTIDE SEQUENCE [GENOMIC DNA]</scope>
</reference>
<accession>P68300</accession>
<accession>O47707</accession>
<accession>O47711</accession>
<accession>O48308</accession>
<gene>
    <name type="primary">MT-CO3</name>
    <name type="synonym">COIII</name>
    <name type="synonym">COXIII</name>
    <name type="synonym">MTCO3</name>
</gene>
<sequence>MTHQTHAYHMVNPSPWPLTGALSALLMTSGLIMWFHFNSTTLLMLGLTTNMLTMYQWWRDVVRESTFQGHHTPNVQKGLRYGMILFIISEVLFFTGFFWAFYHSSLAPTPELGGCWPPTGIHPLNPLEVPLLNTSVLLASGVSITWAHHSLMEGNRNHMLQALFITIALGVYFTLLQASEYYEAPFTISDGVYGSTFFVATGFHGLHVIIGSTFLIVCFFRQLKFHFTSSHHFGFEAAAWYWHFVDVVWLFLYVSIYWWGS</sequence>
<comment type="function">
    <text evidence="2">Component of the cytochrome c oxidase, the last enzyme in the mitochondrial electron transport chain which drives oxidative phosphorylation. The respiratory chain contains 3 multisubunit complexes succinate dehydrogenase (complex II, CII), ubiquinol-cytochrome c oxidoreductase (cytochrome b-c1 complex, complex III, CIII) and cytochrome c oxidase (complex IV, CIV), that cooperate to transfer electrons derived from NADH and succinate to molecular oxygen, creating an electrochemical gradient over the inner membrane that drives transmembrane transport and the ATP synthase. Cytochrome c oxidase is the component of the respiratory chain that catalyzes the reduction of oxygen to water. Electrons originating from reduced cytochrome c in the intermembrane space (IMS) are transferred via the dinuclear copper A center (CU(A)) of subunit 2 and heme A of subunit 1 to the active site in subunit 1, a binuclear center (BNC) formed by heme A3 and copper B (CU(B)). The BNC reduces molecular oxygen to 2 water molecules using 4 electrons from cytochrome c in the IMS and 4 protons from the mitochondrial matrix.</text>
</comment>
<comment type="catalytic activity">
    <reaction evidence="2">
        <text>4 Fe(II)-[cytochrome c] + O2 + 8 H(+)(in) = 4 Fe(III)-[cytochrome c] + 2 H2O + 4 H(+)(out)</text>
        <dbReference type="Rhea" id="RHEA:11436"/>
        <dbReference type="Rhea" id="RHEA-COMP:10350"/>
        <dbReference type="Rhea" id="RHEA-COMP:14399"/>
        <dbReference type="ChEBI" id="CHEBI:15377"/>
        <dbReference type="ChEBI" id="CHEBI:15378"/>
        <dbReference type="ChEBI" id="CHEBI:15379"/>
        <dbReference type="ChEBI" id="CHEBI:29033"/>
        <dbReference type="ChEBI" id="CHEBI:29034"/>
        <dbReference type="EC" id="7.1.1.9"/>
    </reaction>
    <physiologicalReaction direction="left-to-right" evidence="2">
        <dbReference type="Rhea" id="RHEA:11437"/>
    </physiologicalReaction>
</comment>
<comment type="subunit">
    <text evidence="1">Component of the cytochrome c oxidase (complex IV, CIV), a multisubunit enzyme composed of 14 subunits. The complex is composed of a catalytic core of 3 subunits MT-CO1, MT-CO2 and MT-CO3, encoded in the mitochondrial DNA, and 11 supernumerary subunits COX4I, COX5A, COX5B, COX6A, COX6B, COX6C, COX7A, COX7B, COX7C, COX8 and NDUFA4, which are encoded in the nuclear genome. The complex exists as a monomer or a dimer and forms supercomplexes (SCs) in the inner mitochondrial membrane with NADH-ubiquinone oxidoreductase (complex I, CI) and ubiquinol-cytochrome c oxidoreductase (cytochrome b-c1 complex, complex III, CIII), resulting in different assemblies (supercomplex SCI(1)III(2)IV(1) and megacomplex MCI(2)III(2)IV(2)).</text>
</comment>
<comment type="subcellular location">
    <subcellularLocation>
        <location evidence="1">Mitochondrion inner membrane</location>
        <topology evidence="1">Multi-pass membrane protein</topology>
    </subcellularLocation>
</comment>
<comment type="similarity">
    <text evidence="3">Belongs to the cytochrome c oxidase subunit 3 family.</text>
</comment>
<evidence type="ECO:0000250" key="1">
    <source>
        <dbReference type="UniProtKB" id="P00415"/>
    </source>
</evidence>
<evidence type="ECO:0000250" key="2">
    <source>
        <dbReference type="UniProtKB" id="P00420"/>
    </source>
</evidence>
<evidence type="ECO:0000305" key="3"/>
<geneLocation type="mitochondrion"/>
<keyword id="KW-0472">Membrane</keyword>
<keyword id="KW-0496">Mitochondrion</keyword>
<keyword id="KW-0999">Mitochondrion inner membrane</keyword>
<keyword id="KW-1278">Translocase</keyword>
<keyword id="KW-0812">Transmembrane</keyword>
<keyword id="KW-1133">Transmembrane helix</keyword>